<protein>
    <recommendedName>
        <fullName>RING-H2 finger protein ATL54</fullName>
        <ecNumber evidence="5">2.3.2.27</ecNumber>
    </recommendedName>
    <alternativeName>
        <fullName evidence="5">RING-type E3 ubiquitin transferase ATL54</fullName>
    </alternativeName>
</protein>
<keyword id="KW-0472">Membrane</keyword>
<keyword id="KW-0479">Metal-binding</keyword>
<keyword id="KW-1185">Reference proteome</keyword>
<keyword id="KW-0808">Transferase</keyword>
<keyword id="KW-0812">Transmembrane</keyword>
<keyword id="KW-1133">Transmembrane helix</keyword>
<keyword id="KW-0833">Ubl conjugation pathway</keyword>
<keyword id="KW-0862">Zinc</keyword>
<keyword id="KW-0863">Zinc-finger</keyword>
<accession>Q8LFY8</accession>
<accession>Q9C7T3</accession>
<feature type="chain" id="PRO_0000055771" description="RING-H2 finger protein ATL54">
    <location>
        <begin position="1"/>
        <end position="413"/>
    </location>
</feature>
<feature type="transmembrane region" description="Helical" evidence="2">
    <location>
        <begin position="83"/>
        <end position="103"/>
    </location>
</feature>
<feature type="zinc finger region" description="RING-type; atypical" evidence="3">
    <location>
        <begin position="177"/>
        <end position="219"/>
    </location>
</feature>
<feature type="region of interest" description="Disordered" evidence="4">
    <location>
        <begin position="238"/>
        <end position="258"/>
    </location>
</feature>
<feature type="region of interest" description="Disordered" evidence="4">
    <location>
        <begin position="321"/>
        <end position="413"/>
    </location>
</feature>
<feature type="compositionally biased region" description="Low complexity" evidence="4">
    <location>
        <begin position="387"/>
        <end position="401"/>
    </location>
</feature>
<feature type="compositionally biased region" description="Polar residues" evidence="4">
    <location>
        <begin position="402"/>
        <end position="413"/>
    </location>
</feature>
<evidence type="ECO:0000250" key="1"/>
<evidence type="ECO:0000255" key="2"/>
<evidence type="ECO:0000255" key="3">
    <source>
        <dbReference type="PROSITE-ProRule" id="PRU00175"/>
    </source>
</evidence>
<evidence type="ECO:0000256" key="4">
    <source>
        <dbReference type="SAM" id="MobiDB-lite"/>
    </source>
</evidence>
<evidence type="ECO:0000305" key="5"/>
<name>ATL54_ARATH</name>
<proteinExistence type="evidence at transcript level"/>
<reference key="1">
    <citation type="journal article" date="2000" name="Nature">
        <title>Sequence and analysis of chromosome 1 of the plant Arabidopsis thaliana.</title>
        <authorList>
            <person name="Theologis A."/>
            <person name="Ecker J.R."/>
            <person name="Palm C.J."/>
            <person name="Federspiel N.A."/>
            <person name="Kaul S."/>
            <person name="White O."/>
            <person name="Alonso J."/>
            <person name="Altafi H."/>
            <person name="Araujo R."/>
            <person name="Bowman C.L."/>
            <person name="Brooks S.Y."/>
            <person name="Buehler E."/>
            <person name="Chan A."/>
            <person name="Chao Q."/>
            <person name="Chen H."/>
            <person name="Cheuk R.F."/>
            <person name="Chin C.W."/>
            <person name="Chung M.K."/>
            <person name="Conn L."/>
            <person name="Conway A.B."/>
            <person name="Conway A.R."/>
            <person name="Creasy T.H."/>
            <person name="Dewar K."/>
            <person name="Dunn P."/>
            <person name="Etgu P."/>
            <person name="Feldblyum T.V."/>
            <person name="Feng J.-D."/>
            <person name="Fong B."/>
            <person name="Fujii C.Y."/>
            <person name="Gill J.E."/>
            <person name="Goldsmith A.D."/>
            <person name="Haas B."/>
            <person name="Hansen N.F."/>
            <person name="Hughes B."/>
            <person name="Huizar L."/>
            <person name="Hunter J.L."/>
            <person name="Jenkins J."/>
            <person name="Johnson-Hopson C."/>
            <person name="Khan S."/>
            <person name="Khaykin E."/>
            <person name="Kim C.J."/>
            <person name="Koo H.L."/>
            <person name="Kremenetskaia I."/>
            <person name="Kurtz D.B."/>
            <person name="Kwan A."/>
            <person name="Lam B."/>
            <person name="Langin-Hooper S."/>
            <person name="Lee A."/>
            <person name="Lee J.M."/>
            <person name="Lenz C.A."/>
            <person name="Li J.H."/>
            <person name="Li Y.-P."/>
            <person name="Lin X."/>
            <person name="Liu S.X."/>
            <person name="Liu Z.A."/>
            <person name="Luros J.S."/>
            <person name="Maiti R."/>
            <person name="Marziali A."/>
            <person name="Militscher J."/>
            <person name="Miranda M."/>
            <person name="Nguyen M."/>
            <person name="Nierman W.C."/>
            <person name="Osborne B.I."/>
            <person name="Pai G."/>
            <person name="Peterson J."/>
            <person name="Pham P.K."/>
            <person name="Rizzo M."/>
            <person name="Rooney T."/>
            <person name="Rowley D."/>
            <person name="Sakano H."/>
            <person name="Salzberg S.L."/>
            <person name="Schwartz J.R."/>
            <person name="Shinn P."/>
            <person name="Southwick A.M."/>
            <person name="Sun H."/>
            <person name="Tallon L.J."/>
            <person name="Tambunga G."/>
            <person name="Toriumi M.J."/>
            <person name="Town C.D."/>
            <person name="Utterback T."/>
            <person name="Van Aken S."/>
            <person name="Vaysberg M."/>
            <person name="Vysotskaia V.S."/>
            <person name="Walker M."/>
            <person name="Wu D."/>
            <person name="Yu G."/>
            <person name="Fraser C.M."/>
            <person name="Venter J.C."/>
            <person name="Davis R.W."/>
        </authorList>
    </citation>
    <scope>NUCLEOTIDE SEQUENCE [LARGE SCALE GENOMIC DNA]</scope>
    <source>
        <strain>cv. Columbia</strain>
    </source>
</reference>
<reference key="2">
    <citation type="journal article" date="2017" name="Plant J.">
        <title>Araport11: a complete reannotation of the Arabidopsis thaliana reference genome.</title>
        <authorList>
            <person name="Cheng C.Y."/>
            <person name="Krishnakumar V."/>
            <person name="Chan A.P."/>
            <person name="Thibaud-Nissen F."/>
            <person name="Schobel S."/>
            <person name="Town C.D."/>
        </authorList>
    </citation>
    <scope>GENOME REANNOTATION</scope>
    <source>
        <strain>cv. Columbia</strain>
    </source>
</reference>
<reference key="3">
    <citation type="journal article" date="2003" name="Science">
        <title>Empirical analysis of transcriptional activity in the Arabidopsis genome.</title>
        <authorList>
            <person name="Yamada K."/>
            <person name="Lim J."/>
            <person name="Dale J.M."/>
            <person name="Chen H."/>
            <person name="Shinn P."/>
            <person name="Palm C.J."/>
            <person name="Southwick A.M."/>
            <person name="Wu H.C."/>
            <person name="Kim C.J."/>
            <person name="Nguyen M."/>
            <person name="Pham P.K."/>
            <person name="Cheuk R.F."/>
            <person name="Karlin-Newmann G."/>
            <person name="Liu S.X."/>
            <person name="Lam B."/>
            <person name="Sakano H."/>
            <person name="Wu T."/>
            <person name="Yu G."/>
            <person name="Miranda M."/>
            <person name="Quach H.L."/>
            <person name="Tripp M."/>
            <person name="Chang C.H."/>
            <person name="Lee J.M."/>
            <person name="Toriumi M.J."/>
            <person name="Chan M.M."/>
            <person name="Tang C.C."/>
            <person name="Onodera C.S."/>
            <person name="Deng J.M."/>
            <person name="Akiyama K."/>
            <person name="Ansari Y."/>
            <person name="Arakawa T."/>
            <person name="Banh J."/>
            <person name="Banno F."/>
            <person name="Bowser L."/>
            <person name="Brooks S.Y."/>
            <person name="Carninci P."/>
            <person name="Chao Q."/>
            <person name="Choy N."/>
            <person name="Enju A."/>
            <person name="Goldsmith A.D."/>
            <person name="Gurjal M."/>
            <person name="Hansen N.F."/>
            <person name="Hayashizaki Y."/>
            <person name="Johnson-Hopson C."/>
            <person name="Hsuan V.W."/>
            <person name="Iida K."/>
            <person name="Karnes M."/>
            <person name="Khan S."/>
            <person name="Koesema E."/>
            <person name="Ishida J."/>
            <person name="Jiang P.X."/>
            <person name="Jones T."/>
            <person name="Kawai J."/>
            <person name="Kamiya A."/>
            <person name="Meyers C."/>
            <person name="Nakajima M."/>
            <person name="Narusaka M."/>
            <person name="Seki M."/>
            <person name="Sakurai T."/>
            <person name="Satou M."/>
            <person name="Tamse R."/>
            <person name="Vaysberg M."/>
            <person name="Wallender E.K."/>
            <person name="Wong C."/>
            <person name="Yamamura Y."/>
            <person name="Yuan S."/>
            <person name="Shinozaki K."/>
            <person name="Davis R.W."/>
            <person name="Theologis A."/>
            <person name="Ecker J.R."/>
        </authorList>
    </citation>
    <scope>NUCLEOTIDE SEQUENCE [LARGE SCALE MRNA]</scope>
    <source>
        <strain>cv. Columbia</strain>
    </source>
</reference>
<reference key="4">
    <citation type="submission" date="2002-03" db="EMBL/GenBank/DDBJ databases">
        <title>Full-length cDNA from Arabidopsis thaliana.</title>
        <authorList>
            <person name="Brover V.V."/>
            <person name="Troukhan M.E."/>
            <person name="Alexandrov N.A."/>
            <person name="Lu Y.-P."/>
            <person name="Flavell R.B."/>
            <person name="Feldmann K.A."/>
        </authorList>
    </citation>
    <scope>NUCLEOTIDE SEQUENCE [LARGE SCALE MRNA]</scope>
</reference>
<reference key="5">
    <citation type="journal article" date="2002" name="Genome Biol.">
        <title>Evaluation and classification of RING-finger domains encoded by the Arabidopsis genome.</title>
        <authorList>
            <person name="Kosarev P."/>
            <person name="Mayer K.F.X."/>
            <person name="Hardtke C.S."/>
        </authorList>
    </citation>
    <scope>GENE FAMILY ORGANIZATION</scope>
</reference>
<reference key="6">
    <citation type="journal article" date="2006" name="J. Mol. Evol.">
        <title>The ATL gene family from Arabidopsis thaliana and Oryza sativa comprises a large number of putative ubiquitin ligases of the RING-H2 type.</title>
        <authorList>
            <person name="Serrano M."/>
            <person name="Parra S."/>
            <person name="Alcaraz L.D."/>
            <person name="Guzman P."/>
        </authorList>
    </citation>
    <scope>NOMENCLATURE</scope>
    <scope>GENE FAMILY ORGANIZATION</scope>
</reference>
<sequence length="413" mass="45354">MARKKHRKLFPTLASETNKTLDCSNGVCDPICPYNCYPEPDYYTISPQLPPWSSSPQPSPCPSPSISAVYLPSQDSSSSLDAISIITITGAVLAILLTGFFLVAKFFSDSVNRVNQGTYQSDNEDNDTVMEEEFQDREQVDHPIWLIRTTGLQQSIINSITICNYKRGDGLIERTDCPVCLNEFEEDESLRLLPKCNHAFHISCIDTWLSSHTNCPLCRAGIAMISVTTPRYSGPVEVTPGGSGSHLENDGVDEEDHGEIENRVDSDFKESDDSDIRIEIYRFDSDGDGSETETKERVRVLKECMDPNGGDSVNSLSHTKTHVESVDFPGKSCENQSEEFTRHNGEDEASCSEENGGGSNQLRRSCDSGELNGETTGDEGKSQSDISSSTLKTNGSSSSVSCFNKNKSSVFPL</sequence>
<dbReference type="EC" id="2.3.2.27" evidence="5"/>
<dbReference type="EMBL" id="AC067754">
    <property type="protein sequence ID" value="AAG51786.1"/>
    <property type="molecule type" value="Genomic_DNA"/>
</dbReference>
<dbReference type="EMBL" id="CP002684">
    <property type="protein sequence ID" value="AEE35290.1"/>
    <property type="molecule type" value="Genomic_DNA"/>
</dbReference>
<dbReference type="EMBL" id="AY052232">
    <property type="protein sequence ID" value="AAK97702.1"/>
    <property type="molecule type" value="mRNA"/>
</dbReference>
<dbReference type="EMBL" id="BT002303">
    <property type="protein sequence ID" value="AAN73300.1"/>
    <property type="molecule type" value="mRNA"/>
</dbReference>
<dbReference type="EMBL" id="AY084564">
    <property type="protein sequence ID" value="AAM61130.1"/>
    <property type="molecule type" value="mRNA"/>
</dbReference>
<dbReference type="PIR" id="G96745">
    <property type="entry name" value="G96745"/>
</dbReference>
<dbReference type="RefSeq" id="NP_177367.1">
    <property type="nucleotide sequence ID" value="NM_105881.3"/>
</dbReference>
<dbReference type="SMR" id="Q8LFY8"/>
<dbReference type="STRING" id="3702.Q8LFY8"/>
<dbReference type="GlyGen" id="Q8LFY8">
    <property type="glycosylation" value="1 site"/>
</dbReference>
<dbReference type="PaxDb" id="3702-AT1G72220.1"/>
<dbReference type="ProteomicsDB" id="246637"/>
<dbReference type="EnsemblPlants" id="AT1G72220.1">
    <property type="protein sequence ID" value="AT1G72220.1"/>
    <property type="gene ID" value="AT1G72220"/>
</dbReference>
<dbReference type="GeneID" id="843554"/>
<dbReference type="Gramene" id="AT1G72220.1">
    <property type="protein sequence ID" value="AT1G72220.1"/>
    <property type="gene ID" value="AT1G72220"/>
</dbReference>
<dbReference type="KEGG" id="ath:AT1G72220"/>
<dbReference type="Araport" id="AT1G72220"/>
<dbReference type="TAIR" id="AT1G72220">
    <property type="gene designation" value="ATL54"/>
</dbReference>
<dbReference type="eggNOG" id="KOG0800">
    <property type="taxonomic scope" value="Eukaryota"/>
</dbReference>
<dbReference type="HOGENOM" id="CLU_040108_0_0_1"/>
<dbReference type="InParanoid" id="Q8LFY8"/>
<dbReference type="OMA" id="ITICNYK"/>
<dbReference type="PhylomeDB" id="Q8LFY8"/>
<dbReference type="UniPathway" id="UPA00143"/>
<dbReference type="PRO" id="PR:Q8LFY8"/>
<dbReference type="Proteomes" id="UP000006548">
    <property type="component" value="Chromosome 1"/>
</dbReference>
<dbReference type="ExpressionAtlas" id="Q8LFY8">
    <property type="expression patterns" value="baseline and differential"/>
</dbReference>
<dbReference type="GO" id="GO:0016020">
    <property type="term" value="C:membrane"/>
    <property type="evidence" value="ECO:0007669"/>
    <property type="project" value="UniProtKB-SubCell"/>
</dbReference>
<dbReference type="GO" id="GO:0016740">
    <property type="term" value="F:transferase activity"/>
    <property type="evidence" value="ECO:0007669"/>
    <property type="project" value="UniProtKB-KW"/>
</dbReference>
<dbReference type="GO" id="GO:0008270">
    <property type="term" value="F:zinc ion binding"/>
    <property type="evidence" value="ECO:0007669"/>
    <property type="project" value="UniProtKB-KW"/>
</dbReference>
<dbReference type="GO" id="GO:0016567">
    <property type="term" value="P:protein ubiquitination"/>
    <property type="evidence" value="ECO:0007669"/>
    <property type="project" value="UniProtKB-UniPathway"/>
</dbReference>
<dbReference type="CDD" id="cd16461">
    <property type="entry name" value="RING-H2_EL5-like"/>
    <property type="match status" value="1"/>
</dbReference>
<dbReference type="FunFam" id="3.30.40.10:FF:000233">
    <property type="entry name" value="RING-H2 finger protein ATL54"/>
    <property type="match status" value="1"/>
</dbReference>
<dbReference type="Gene3D" id="3.30.40.10">
    <property type="entry name" value="Zinc/RING finger domain, C3HC4 (zinc finger)"/>
    <property type="match status" value="1"/>
</dbReference>
<dbReference type="InterPro" id="IPR044600">
    <property type="entry name" value="ATL1/ATL16-like"/>
</dbReference>
<dbReference type="InterPro" id="IPR001841">
    <property type="entry name" value="Znf_RING"/>
</dbReference>
<dbReference type="InterPro" id="IPR013083">
    <property type="entry name" value="Znf_RING/FYVE/PHD"/>
</dbReference>
<dbReference type="PANTHER" id="PTHR46913">
    <property type="entry name" value="RING-H2 FINGER PROTEIN ATL16"/>
    <property type="match status" value="1"/>
</dbReference>
<dbReference type="PANTHER" id="PTHR46913:SF19">
    <property type="entry name" value="RING-TYPE E3 UBIQUITIN TRANSFERASE"/>
    <property type="match status" value="1"/>
</dbReference>
<dbReference type="Pfam" id="PF13639">
    <property type="entry name" value="zf-RING_2"/>
    <property type="match status" value="1"/>
</dbReference>
<dbReference type="SMART" id="SM00184">
    <property type="entry name" value="RING"/>
    <property type="match status" value="1"/>
</dbReference>
<dbReference type="SUPFAM" id="SSF57850">
    <property type="entry name" value="RING/U-box"/>
    <property type="match status" value="1"/>
</dbReference>
<dbReference type="PROSITE" id="PS50089">
    <property type="entry name" value="ZF_RING_2"/>
    <property type="match status" value="1"/>
</dbReference>
<organism>
    <name type="scientific">Arabidopsis thaliana</name>
    <name type="common">Mouse-ear cress</name>
    <dbReference type="NCBI Taxonomy" id="3702"/>
    <lineage>
        <taxon>Eukaryota</taxon>
        <taxon>Viridiplantae</taxon>
        <taxon>Streptophyta</taxon>
        <taxon>Embryophyta</taxon>
        <taxon>Tracheophyta</taxon>
        <taxon>Spermatophyta</taxon>
        <taxon>Magnoliopsida</taxon>
        <taxon>eudicotyledons</taxon>
        <taxon>Gunneridae</taxon>
        <taxon>Pentapetalae</taxon>
        <taxon>rosids</taxon>
        <taxon>malvids</taxon>
        <taxon>Brassicales</taxon>
        <taxon>Brassicaceae</taxon>
        <taxon>Camelineae</taxon>
        <taxon>Arabidopsis</taxon>
    </lineage>
</organism>
<comment type="catalytic activity">
    <reaction evidence="5">
        <text>S-ubiquitinyl-[E2 ubiquitin-conjugating enzyme]-L-cysteine + [acceptor protein]-L-lysine = [E2 ubiquitin-conjugating enzyme]-L-cysteine + N(6)-ubiquitinyl-[acceptor protein]-L-lysine.</text>
        <dbReference type="EC" id="2.3.2.27"/>
    </reaction>
</comment>
<comment type="pathway">
    <text>Protein modification; protein ubiquitination.</text>
</comment>
<comment type="subcellular location">
    <subcellularLocation>
        <location evidence="5">Membrane</location>
        <topology evidence="5">Single-pass membrane protein</topology>
    </subcellularLocation>
</comment>
<comment type="domain">
    <text evidence="1">The RING-type zinc finger domain mediates binding to an E2 ubiquitin-conjugating enzyme.</text>
</comment>
<comment type="similarity">
    <text evidence="5">Belongs to the RING-type zinc finger family. ATL subfamily.</text>
</comment>
<gene>
    <name type="primary">ATL54</name>
    <name type="ordered locus">At1g72220</name>
    <name type="ORF">T9N14.22</name>
</gene>